<gene>
    <name evidence="10" type="primary">TRB</name>
</gene>
<evidence type="ECO:0000250" key="1">
    <source>
        <dbReference type="UniProtKB" id="A0A5B9"/>
    </source>
</evidence>
<evidence type="ECO:0000250" key="2">
    <source>
        <dbReference type="UniProtKB" id="P01848"/>
    </source>
</evidence>
<evidence type="ECO:0000250" key="3">
    <source>
        <dbReference type="UniProtKB" id="P01850"/>
    </source>
</evidence>
<evidence type="ECO:0000250" key="4">
    <source>
        <dbReference type="UniProtKB" id="P0DSE1"/>
    </source>
</evidence>
<evidence type="ECO:0000255" key="5"/>
<evidence type="ECO:0000255" key="6">
    <source>
        <dbReference type="PROSITE-ProRule" id="PRU00114"/>
    </source>
</evidence>
<evidence type="ECO:0000255" key="7">
    <source>
        <dbReference type="PROSITE-ProRule" id="PRU00498"/>
    </source>
</evidence>
<evidence type="ECO:0000269" key="8">
    <source>
    </source>
</evidence>
<evidence type="ECO:0000305" key="9">
    <source>
    </source>
</evidence>
<evidence type="ECO:0000312" key="10">
    <source>
        <dbReference type="HGNC" id="HGNC:12155"/>
    </source>
</evidence>
<evidence type="ECO:0007829" key="11">
    <source>
        <dbReference type="PDB" id="8T4Z"/>
    </source>
</evidence>
<evidence type="ECO:0007829" key="12">
    <source>
        <dbReference type="PDB" id="8TW4"/>
    </source>
</evidence>
<sequence>MTIRLLCYMGFYFLGAGLMEADIYQTPRYLVIGTGKKITLECSQTMGHDKMYWYQQDPGMELHLIHYSYGVNSTEKGDLSSESTVSRIRTEHFPLTLESARPSHTSQYLCASSEARGLAEFTDTQYFGPGTRLTVLEDLKNVFPPEVAVFEPSEAEISHTQKATLVCLATGFYPDHVELSWWVNGKEVHSGVSTDPQPLKEQPALNDSRYCLSSRLRVSATFWQNPRNHFRCQVQFYGLSENDEWTQDRAKPVTQIVSAEAWGRADCGFTSESYQQGVLSATILYEILLGKATLYAVLVSALVLMAMVKRKDSRG</sequence>
<proteinExistence type="evidence at protein level"/>
<dbReference type="EMBL" id="MN782534">
    <property type="status" value="NOT_ANNOTATED_CDS"/>
    <property type="molecule type" value="mRNA"/>
</dbReference>
<dbReference type="EMBL" id="M12888">
    <property type="protein sequence ID" value="AAA60662.1"/>
    <property type="molecule type" value="Genomic_DNA"/>
</dbReference>
<dbReference type="EMBL" id="CH471198">
    <property type="protein sequence ID" value="EAW51910.1"/>
    <property type="molecule type" value="Genomic_DNA"/>
</dbReference>
<dbReference type="EMBL" id="AC244472">
    <property type="status" value="NOT_ANNOTATED_CDS"/>
    <property type="molecule type" value="Genomic_DNA"/>
</dbReference>
<dbReference type="EMBL" id="AC239618">
    <property type="status" value="NOT_ANNOTATED_CDS"/>
    <property type="molecule type" value="Genomic_DNA"/>
</dbReference>
<dbReference type="EMBL" id="AC245427">
    <property type="status" value="NOT_ANNOTATED_CDS"/>
    <property type="molecule type" value="Genomic_DNA"/>
</dbReference>
<dbReference type="PDB" id="8T4Z">
    <property type="method" value="X-ray"/>
    <property type="resolution" value="2.69 A"/>
    <property type="chains" value="D=137-266"/>
</dbReference>
<dbReference type="PDB" id="8TW4">
    <property type="method" value="EM"/>
    <property type="resolution" value="3.30 A"/>
    <property type="chains" value="B=132-315"/>
</dbReference>
<dbReference type="PDB" id="8Y6X">
    <property type="method" value="X-ray"/>
    <property type="resolution" value="3.40 A"/>
    <property type="chains" value="E=20-266"/>
</dbReference>
<dbReference type="PDB" id="8YIV">
    <property type="method" value="X-ray"/>
    <property type="resolution" value="2.10 A"/>
    <property type="chains" value="E=19-266"/>
</dbReference>
<dbReference type="PDB" id="8YJ2">
    <property type="method" value="X-ray"/>
    <property type="resolution" value="2.26 A"/>
    <property type="chains" value="E=19-266"/>
</dbReference>
<dbReference type="PDB" id="8YJ3">
    <property type="method" value="X-ray"/>
    <property type="resolution" value="3.50 A"/>
    <property type="chains" value="A/C/E/G=19-266"/>
</dbReference>
<dbReference type="PDB" id="9C3E">
    <property type="method" value="EM"/>
    <property type="resolution" value="3.50 A"/>
    <property type="chains" value="B=1-315"/>
</dbReference>
<dbReference type="PDBsum" id="8T4Z"/>
<dbReference type="PDBsum" id="8TW4"/>
<dbReference type="PDBsum" id="8Y6X"/>
<dbReference type="PDBsum" id="8YIV"/>
<dbReference type="PDBsum" id="8YJ2"/>
<dbReference type="PDBsum" id="8YJ3"/>
<dbReference type="PDBsum" id="9C3E"/>
<dbReference type="EMDB" id="EMD-44417"/>
<dbReference type="EMDB" id="EMD-60321"/>
<dbReference type="SMR" id="P0DTU4"/>
<dbReference type="CORUM" id="P0DTU4"/>
<dbReference type="FunCoup" id="P0DTU4">
    <property type="interactions" value="581"/>
</dbReference>
<dbReference type="GlyCosmos" id="P0DTU4">
    <property type="glycosylation" value="2 sites, No reported glycans"/>
</dbReference>
<dbReference type="GlyGen" id="P0DTU4">
    <property type="glycosylation" value="2 sites"/>
</dbReference>
<dbReference type="MassIVE" id="P0DTU4"/>
<dbReference type="PeptideAtlas" id="P0DTU4"/>
<dbReference type="AGR" id="HGNC:12155"/>
<dbReference type="GeneCards" id="TRB"/>
<dbReference type="HGNC" id="HGNC:12155">
    <property type="gene designation" value="TRB"/>
</dbReference>
<dbReference type="MalaCards" id="TRB"/>
<dbReference type="neXtProt" id="NX_P0DTU4"/>
<dbReference type="InParanoid" id="P0DTU4"/>
<dbReference type="Proteomes" id="UP000005640">
    <property type="component" value="Unplaced"/>
</dbReference>
<dbReference type="GO" id="GO:0042105">
    <property type="term" value="C:alpha-beta T cell receptor complex"/>
    <property type="evidence" value="ECO:0000314"/>
    <property type="project" value="UniProtKB"/>
</dbReference>
<dbReference type="GO" id="GO:0005886">
    <property type="term" value="C:plasma membrane"/>
    <property type="evidence" value="ECO:0000318"/>
    <property type="project" value="GO_Central"/>
</dbReference>
<dbReference type="GO" id="GO:0038023">
    <property type="term" value="F:signaling receptor activity"/>
    <property type="evidence" value="ECO:0000314"/>
    <property type="project" value="UniProtKB"/>
</dbReference>
<dbReference type="GO" id="GO:0007166">
    <property type="term" value="P:cell surface receptor signaling pathway"/>
    <property type="evidence" value="ECO:0000318"/>
    <property type="project" value="GO_Central"/>
</dbReference>
<dbReference type="GO" id="GO:0002355">
    <property type="term" value="P:detection of tumor cell"/>
    <property type="evidence" value="ECO:0000314"/>
    <property type="project" value="UniProtKB"/>
</dbReference>
<dbReference type="GO" id="GO:0002419">
    <property type="term" value="P:T cell mediated cytotoxicity directed against tumor cell target"/>
    <property type="evidence" value="ECO:0000314"/>
    <property type="project" value="UniProtKB"/>
</dbReference>
<dbReference type="CDD" id="cd05769">
    <property type="entry name" value="IgC1_TCR_beta"/>
    <property type="match status" value="1"/>
</dbReference>
<dbReference type="CDD" id="cd05899">
    <property type="entry name" value="IgV_TCR_beta"/>
    <property type="match status" value="1"/>
</dbReference>
<dbReference type="FunFam" id="2.60.40.10:FF:001090">
    <property type="entry name" value="T cell receptor beta constant 1"/>
    <property type="match status" value="1"/>
</dbReference>
<dbReference type="Gene3D" id="2.60.40.10">
    <property type="entry name" value="Immunoglobulins"/>
    <property type="match status" value="2"/>
</dbReference>
<dbReference type="InterPro" id="IPR007110">
    <property type="entry name" value="Ig-like_dom"/>
</dbReference>
<dbReference type="InterPro" id="IPR036179">
    <property type="entry name" value="Ig-like_dom_sf"/>
</dbReference>
<dbReference type="InterPro" id="IPR013783">
    <property type="entry name" value="Ig-like_fold"/>
</dbReference>
<dbReference type="InterPro" id="IPR003597">
    <property type="entry name" value="Ig_C1-set"/>
</dbReference>
<dbReference type="InterPro" id="IPR003599">
    <property type="entry name" value="Ig_sub"/>
</dbReference>
<dbReference type="InterPro" id="IPR013106">
    <property type="entry name" value="Ig_V-set"/>
</dbReference>
<dbReference type="InterPro" id="IPR050413">
    <property type="entry name" value="TCR_beta_variable"/>
</dbReference>
<dbReference type="PANTHER" id="PTHR23268:SF30">
    <property type="entry name" value="T CELL RECEPTOR BETA CHAIN MC.7.G5-RELATED"/>
    <property type="match status" value="1"/>
</dbReference>
<dbReference type="PANTHER" id="PTHR23268">
    <property type="entry name" value="T-CELL RECEPTOR BETA CHAIN"/>
    <property type="match status" value="1"/>
</dbReference>
<dbReference type="Pfam" id="PF07654">
    <property type="entry name" value="C1-set"/>
    <property type="match status" value="1"/>
</dbReference>
<dbReference type="Pfam" id="PF07686">
    <property type="entry name" value="V-set"/>
    <property type="match status" value="1"/>
</dbReference>
<dbReference type="SMART" id="SM00409">
    <property type="entry name" value="IG"/>
    <property type="match status" value="1"/>
</dbReference>
<dbReference type="SMART" id="SM00407">
    <property type="entry name" value="IGc1"/>
    <property type="match status" value="1"/>
</dbReference>
<dbReference type="SUPFAM" id="SSF48726">
    <property type="entry name" value="Immunoglobulin"/>
    <property type="match status" value="2"/>
</dbReference>
<dbReference type="PROSITE" id="PS50835">
    <property type="entry name" value="IG_LIKE"/>
    <property type="match status" value="2"/>
</dbReference>
<organism>
    <name type="scientific">Homo sapiens</name>
    <name type="common">Human</name>
    <dbReference type="NCBI Taxonomy" id="9606"/>
    <lineage>
        <taxon>Eukaryota</taxon>
        <taxon>Metazoa</taxon>
        <taxon>Chordata</taxon>
        <taxon>Craniata</taxon>
        <taxon>Vertebrata</taxon>
        <taxon>Euteleostomi</taxon>
        <taxon>Mammalia</taxon>
        <taxon>Eutheria</taxon>
        <taxon>Euarchontoglires</taxon>
        <taxon>Primates</taxon>
        <taxon>Haplorrhini</taxon>
        <taxon>Catarrhini</taxon>
        <taxon>Hominidae</taxon>
        <taxon>Homo</taxon>
    </lineage>
</organism>
<protein>
    <recommendedName>
        <fullName>T cell receptor beta chain MC.7.G5</fullName>
    </recommendedName>
    <alternativeName>
        <fullName>TR beta chain TRBV25-1*01J2S3*01C2*01</fullName>
        <shortName>MC.7.G5 TRB</shortName>
    </alternativeName>
</protein>
<comment type="function">
    <text evidence="2 8">The beta chain of TRAV38-2DV8*01J31*01C*01/TRBV25-1*01J2S3*01C2*01 alpha-beta T cell receptor (TR) clonotype that displays pan-cancer cell recognition via the invariant MR1 molecule. On CD8-positive T cell clone MC.7.G5, likely recognizes tumor-specific or -associated metabolite(s) essential for cancer cell survival, triggering killing of many cancer cell types including lung, melanoma, leukemia, colon, breast, prostate, bone and ovarian cancer cells. Mediates cancer cell cytotoxicity in an HLA-independent manner. Has no reactivity to healthy cells even stressed or infected by bacteria (PubMed:31959982). Antigen recognition initiates TR-CD3 clustering on the cell surface and intracellular activation of LCK that phosphorylates the ITAM motifs of CD3G, CD3D, CD3E and CD247 enabling the recruitment of ZAP70. In turn, ZAP70 phosphorylates LAT, which recruits numerous signaling molecules to form the LAT signalosome. The LAT signalosome propagates signal branching to three major signaling pathways, the calcium, the mitogen-activated protein kinase (MAPK) kinase and the nuclear factor NF-kappa-B (NF-kB) pathways, leading to the mobilization of transcription factors that are critical for gene expression and essential for T cell differentiation into effector/memory T cells (By similarity).</text>
</comment>
<comment type="subunit">
    <text evidence="2 8">Disulfide-linked heterodimer with TRAV38-2DV8*01J31*01C*01 alpha chain (PubMed:31959982). The alpha-beta TR associates with the transmembrane signaling CD3 coreceptor proteins to form the TR-CD3 (TCR). The assembly of alpha-beta TR heterodimers with CD3 occurs in the endoplasmic reticulum where a single alpha-beta TR heterodimer associates with one CD3D-CD3E heterodimer, one CD3G-CD3E heterodimer and one CD247 homodimer forming a stable octameric structure. CD3D-CD3E and CD3G-CD3E heterodimers preferentially associate with TR alpha and TR beta chains (via TM domain), respectively. The association of the CD247 homodimer is the last step of TCR assembly in the endoplasmic reticulum and is required for transport to the cell surface (By similarity).</text>
</comment>
<comment type="subcellular location">
    <subcellularLocation>
        <location evidence="8">Cell membrane</location>
    </subcellularLocation>
</comment>
<comment type="tissue specificity">
    <text evidence="8">Expressed in MR1-restricted CD8-positive T cells.</text>
</comment>
<comment type="domain">
    <text evidence="4">The complementarity-determining region CDR1 confers specificity to the metabolite antigen.</text>
</comment>
<comment type="domain">
    <text evidence="4">The complementarity-determining region CDR2 confers specificity to the metabolite antigen.</text>
</comment>
<comment type="domain">
    <text evidence="4">The complementarity-determining region CDR3 confers specificity to the metabolite antigen.</text>
</comment>
<comment type="domain">
    <text evidence="2">The connecting peptide (CP) domain is essential for signal transmission in response to antigenic stimulation, likely downstream from ZAP70 recruitment.</text>
</comment>
<comment type="domain">
    <text evidence="2">The TM domain mediates the interaction with the CD3 subunits.</text>
</comment>
<comment type="caution">
    <text evidence="8">This sequence is an example of a full-length TR beta chain. Pan-cancer TRBV25-1*01J2S3*01C2*01 TCR beta chain is generated by somatic recombination of variable TRBV25-1 (AC A0A075B6N4) and joining TRBJ2-3 (AC A0A0B4J200) gene segments spliced to constant TRBC2*01 (AC A0A5B9) gene segment.</text>
</comment>
<reference key="1">
    <citation type="journal article" date="2020" name="Nat. Immunol.">
        <title>Genome-wide CRISPR-Cas9 screening reveals ubiquitous T cell cancer targeting via the monomorphic MHC class I-related protein MR1.</title>
        <authorList>
            <person name="Crowther M.D."/>
            <person name="Dolton G."/>
            <person name="Legut M."/>
            <person name="Caillaud M.E."/>
            <person name="Lloyd A."/>
            <person name="Attaf M."/>
            <person name="Galloway S.A.E."/>
            <person name="Rius C."/>
            <person name="Farrell C.P."/>
            <person name="Szomolay B."/>
            <person name="Ager A."/>
            <person name="Parker A.L."/>
            <person name="Fuller A."/>
            <person name="Donia M."/>
            <person name="McCluskey J."/>
            <person name="Rossjohn J."/>
            <person name="Svane I.M."/>
            <person name="Phillips J.D."/>
            <person name="Sewell A.K."/>
        </authorList>
    </citation>
    <scope>NUCLEOTIDE SEQUENCE [MRNA]</scope>
    <scope>REGION</scope>
    <scope>CDR3 DOMAIN</scope>
    <scope>FUNCTION</scope>
    <scope>SUBUNIT</scope>
    <scope>SUBCELLULAR LOCATION</scope>
    <scope>TISSUE SPECIFICITY</scope>
    <scope>CAUTION</scope>
</reference>
<reference key="2">
    <citation type="journal article" date="1985" name="Proc. Natl. Acad. Sci. U.S.A.">
        <title>Sequence and evolution of the human T-cell antigen receptor beta-chain genes.</title>
        <authorList>
            <person name="Tunnacliffe A."/>
            <person name="Kefford R."/>
            <person name="Milstein C."/>
            <person name="Forster A."/>
            <person name="Rabbitts T.H."/>
        </authorList>
    </citation>
    <scope>NUCLEOTIDE SEQUENCE [GENOMIC DNA] (IMGT ALLELE TRBC2*01)</scope>
</reference>
<reference key="3">
    <citation type="journal article" date="2001" name="Science">
        <title>The sequence of the human genome.</title>
        <authorList>
            <person name="Venter J.C."/>
            <person name="Adams M.D."/>
            <person name="Myers E.W."/>
            <person name="Li P.W."/>
            <person name="Mural R.J."/>
            <person name="Sutton G.G."/>
            <person name="Smith H.O."/>
            <person name="Yandell M."/>
            <person name="Evans C.A."/>
            <person name="Holt R.A."/>
            <person name="Gocayne J.D."/>
            <person name="Amanatides P."/>
            <person name="Ballew R.M."/>
            <person name="Huson D.H."/>
            <person name="Wortman J.R."/>
            <person name="Zhang Q."/>
            <person name="Kodira C.D."/>
            <person name="Zheng X.H."/>
            <person name="Chen L."/>
            <person name="Skupski M."/>
            <person name="Subramanian G."/>
            <person name="Thomas P.D."/>
            <person name="Zhang J."/>
            <person name="Gabor Miklos G.L."/>
            <person name="Nelson C."/>
            <person name="Broder S."/>
            <person name="Clark A.G."/>
            <person name="Nadeau J."/>
            <person name="McKusick V.A."/>
            <person name="Zinder N."/>
            <person name="Levine A.J."/>
            <person name="Roberts R.J."/>
            <person name="Simon M."/>
            <person name="Slayman C."/>
            <person name="Hunkapiller M."/>
            <person name="Bolanos R."/>
            <person name="Delcher A."/>
            <person name="Dew I."/>
            <person name="Fasulo D."/>
            <person name="Flanigan M."/>
            <person name="Florea L."/>
            <person name="Halpern A."/>
            <person name="Hannenhalli S."/>
            <person name="Kravitz S."/>
            <person name="Levy S."/>
            <person name="Mobarry C."/>
            <person name="Reinert K."/>
            <person name="Remington K."/>
            <person name="Abu-Threideh J."/>
            <person name="Beasley E."/>
            <person name="Biddick K."/>
            <person name="Bonazzi V."/>
            <person name="Brandon R."/>
            <person name="Cargill M."/>
            <person name="Chandramouliswaran I."/>
            <person name="Charlab R."/>
            <person name="Chaturvedi K."/>
            <person name="Deng Z."/>
            <person name="Di Francesco V."/>
            <person name="Dunn P."/>
            <person name="Eilbeck K."/>
            <person name="Evangelista C."/>
            <person name="Gabrielian A.E."/>
            <person name="Gan W."/>
            <person name="Ge W."/>
            <person name="Gong F."/>
            <person name="Gu Z."/>
            <person name="Guan P."/>
            <person name="Heiman T.J."/>
            <person name="Higgins M.E."/>
            <person name="Ji R.R."/>
            <person name="Ke Z."/>
            <person name="Ketchum K.A."/>
            <person name="Lai Z."/>
            <person name="Lei Y."/>
            <person name="Li Z."/>
            <person name="Li J."/>
            <person name="Liang Y."/>
            <person name="Lin X."/>
            <person name="Lu F."/>
            <person name="Merkulov G.V."/>
            <person name="Milshina N."/>
            <person name="Moore H.M."/>
            <person name="Naik A.K."/>
            <person name="Narayan V.A."/>
            <person name="Neelam B."/>
            <person name="Nusskern D."/>
            <person name="Rusch D.B."/>
            <person name="Salzberg S."/>
            <person name="Shao W."/>
            <person name="Shue B."/>
            <person name="Sun J."/>
            <person name="Wang Z."/>
            <person name="Wang A."/>
            <person name="Wang X."/>
            <person name="Wang J."/>
            <person name="Wei M."/>
            <person name="Wides R."/>
            <person name="Xiao C."/>
            <person name="Yan C."/>
            <person name="Yao A."/>
            <person name="Ye J."/>
            <person name="Zhan M."/>
            <person name="Zhang W."/>
            <person name="Zhang H."/>
            <person name="Zhao Q."/>
            <person name="Zheng L."/>
            <person name="Zhong F."/>
            <person name="Zhong W."/>
            <person name="Zhu S."/>
            <person name="Zhao S."/>
            <person name="Gilbert D."/>
            <person name="Baumhueter S."/>
            <person name="Spier G."/>
            <person name="Carter C."/>
            <person name="Cravchik A."/>
            <person name="Woodage T."/>
            <person name="Ali F."/>
            <person name="An H."/>
            <person name="Awe A."/>
            <person name="Baldwin D."/>
            <person name="Baden H."/>
            <person name="Barnstead M."/>
            <person name="Barrow I."/>
            <person name="Beeson K."/>
            <person name="Busam D."/>
            <person name="Carver A."/>
            <person name="Center A."/>
            <person name="Cheng M.L."/>
            <person name="Curry L."/>
            <person name="Danaher S."/>
            <person name="Davenport L."/>
            <person name="Desilets R."/>
            <person name="Dietz S."/>
            <person name="Dodson K."/>
            <person name="Doup L."/>
            <person name="Ferriera S."/>
            <person name="Garg N."/>
            <person name="Gluecksmann A."/>
            <person name="Hart B."/>
            <person name="Haynes J."/>
            <person name="Haynes C."/>
            <person name="Heiner C."/>
            <person name="Hladun S."/>
            <person name="Hostin D."/>
            <person name="Houck J."/>
            <person name="Howland T."/>
            <person name="Ibegwam C."/>
            <person name="Johnson J."/>
            <person name="Kalush F."/>
            <person name="Kline L."/>
            <person name="Koduru S."/>
            <person name="Love A."/>
            <person name="Mann F."/>
            <person name="May D."/>
            <person name="McCawley S."/>
            <person name="McIntosh T."/>
            <person name="McMullen I."/>
            <person name="Moy M."/>
            <person name="Moy L."/>
            <person name="Murphy B."/>
            <person name="Nelson K."/>
            <person name="Pfannkoch C."/>
            <person name="Pratts E."/>
            <person name="Puri V."/>
            <person name="Qureshi H."/>
            <person name="Reardon M."/>
            <person name="Rodriguez R."/>
            <person name="Rogers Y.H."/>
            <person name="Romblad D."/>
            <person name="Ruhfel B."/>
            <person name="Scott R."/>
            <person name="Sitter C."/>
            <person name="Smallwood M."/>
            <person name="Stewart E."/>
            <person name="Strong R."/>
            <person name="Suh E."/>
            <person name="Thomas R."/>
            <person name="Tint N.N."/>
            <person name="Tse S."/>
            <person name="Vech C."/>
            <person name="Wang G."/>
            <person name="Wetter J."/>
            <person name="Williams S."/>
            <person name="Williams M."/>
            <person name="Windsor S."/>
            <person name="Winn-Deen E."/>
            <person name="Wolfe K."/>
            <person name="Zaveri J."/>
            <person name="Zaveri K."/>
            <person name="Abril J.F."/>
            <person name="Guigo R."/>
            <person name="Campbell M.J."/>
            <person name="Sjolander K.V."/>
            <person name="Karlak B."/>
            <person name="Kejariwal A."/>
            <person name="Mi H."/>
            <person name="Lazareva B."/>
            <person name="Hatton T."/>
            <person name="Narechania A."/>
            <person name="Diemer K."/>
            <person name="Muruganujan A."/>
            <person name="Guo N."/>
            <person name="Sato S."/>
            <person name="Bafna V."/>
            <person name="Istrail S."/>
            <person name="Lippert R."/>
            <person name="Schwartz R."/>
            <person name="Walenz B."/>
            <person name="Yooseph S."/>
            <person name="Allen D."/>
            <person name="Basu A."/>
            <person name="Baxendale J."/>
            <person name="Blick L."/>
            <person name="Caminha M."/>
            <person name="Carnes-Stine J."/>
            <person name="Caulk P."/>
            <person name="Chiang Y.H."/>
            <person name="Coyne M."/>
            <person name="Dahlke C."/>
            <person name="Mays A."/>
            <person name="Dombroski M."/>
            <person name="Donnelly M."/>
            <person name="Ely D."/>
            <person name="Esparham S."/>
            <person name="Fosler C."/>
            <person name="Gire H."/>
            <person name="Glanowski S."/>
            <person name="Glasser K."/>
            <person name="Glodek A."/>
            <person name="Gorokhov M."/>
            <person name="Graham K."/>
            <person name="Gropman B."/>
            <person name="Harris M."/>
            <person name="Heil J."/>
            <person name="Henderson S."/>
            <person name="Hoover J."/>
            <person name="Jennings D."/>
            <person name="Jordan C."/>
            <person name="Jordan J."/>
            <person name="Kasha J."/>
            <person name="Kagan L."/>
            <person name="Kraft C."/>
            <person name="Levitsky A."/>
            <person name="Lewis M."/>
            <person name="Liu X."/>
            <person name="Lopez J."/>
            <person name="Ma D."/>
            <person name="Majoros W."/>
            <person name="McDaniel J."/>
            <person name="Murphy S."/>
            <person name="Newman M."/>
            <person name="Nguyen T."/>
            <person name="Nguyen N."/>
            <person name="Nodell M."/>
            <person name="Pan S."/>
            <person name="Peck J."/>
            <person name="Peterson M."/>
            <person name="Rowe W."/>
            <person name="Sanders R."/>
            <person name="Scott J."/>
            <person name="Simpson M."/>
            <person name="Smith T."/>
            <person name="Sprague A."/>
            <person name="Stockwell T."/>
            <person name="Turner R."/>
            <person name="Venter E."/>
            <person name="Wang M."/>
            <person name="Wen M."/>
            <person name="Wu D."/>
            <person name="Wu M."/>
            <person name="Xia A."/>
            <person name="Zandieh A."/>
            <person name="Zhu X."/>
        </authorList>
    </citation>
    <scope>NUCLEOTIDE SEQUENCE [LARGE SCALE GENOMIC DNA] (IMGT ALLELE TRBJ2-3*01)</scope>
</reference>
<reference key="4">
    <citation type="journal article" date="2003" name="Nature">
        <title>The DNA sequence of human chromosome 7.</title>
        <authorList>
            <person name="Hillier L.W."/>
            <person name="Fulton R.S."/>
            <person name="Fulton L.A."/>
            <person name="Graves T.A."/>
            <person name="Pepin K.H."/>
            <person name="Wagner-McPherson C."/>
            <person name="Layman D."/>
            <person name="Maas J."/>
            <person name="Jaeger S."/>
            <person name="Walker R."/>
            <person name="Wylie K."/>
            <person name="Sekhon M."/>
            <person name="Becker M.C."/>
            <person name="O'Laughlin M.D."/>
            <person name="Schaller M.E."/>
            <person name="Fewell G.A."/>
            <person name="Delehaunty K.D."/>
            <person name="Miner T.L."/>
            <person name="Nash W.E."/>
            <person name="Cordes M."/>
            <person name="Du H."/>
            <person name="Sun H."/>
            <person name="Edwards J."/>
            <person name="Bradshaw-Cordum H."/>
            <person name="Ali J."/>
            <person name="Andrews S."/>
            <person name="Isak A."/>
            <person name="Vanbrunt A."/>
            <person name="Nguyen C."/>
            <person name="Du F."/>
            <person name="Lamar B."/>
            <person name="Courtney L."/>
            <person name="Kalicki J."/>
            <person name="Ozersky P."/>
            <person name="Bielicki L."/>
            <person name="Scott K."/>
            <person name="Holmes A."/>
            <person name="Harkins R."/>
            <person name="Harris A."/>
            <person name="Strong C.M."/>
            <person name="Hou S."/>
            <person name="Tomlinson C."/>
            <person name="Dauphin-Kohlberg S."/>
            <person name="Kozlowicz-Reilly A."/>
            <person name="Leonard S."/>
            <person name="Rohlfing T."/>
            <person name="Rock S.M."/>
            <person name="Tin-Wollam A.-M."/>
            <person name="Abbott A."/>
            <person name="Minx P."/>
            <person name="Maupin R."/>
            <person name="Strowmatt C."/>
            <person name="Latreille P."/>
            <person name="Miller N."/>
            <person name="Johnson D."/>
            <person name="Murray J."/>
            <person name="Woessner J.P."/>
            <person name="Wendl M.C."/>
            <person name="Yang S.-P."/>
            <person name="Schultz B.R."/>
            <person name="Wallis J.W."/>
            <person name="Spieth J."/>
            <person name="Bieri T.A."/>
            <person name="Nelson J.O."/>
            <person name="Berkowicz N."/>
            <person name="Wohldmann P.E."/>
            <person name="Cook L.L."/>
            <person name="Hickenbotham M.T."/>
            <person name="Eldred J."/>
            <person name="Williams D."/>
            <person name="Bedell J.A."/>
            <person name="Mardis E.R."/>
            <person name="Clifton S.W."/>
            <person name="Chissoe S.L."/>
            <person name="Marra M.A."/>
            <person name="Raymond C."/>
            <person name="Haugen E."/>
            <person name="Gillett W."/>
            <person name="Zhou Y."/>
            <person name="James R."/>
            <person name="Phelps K."/>
            <person name="Iadanoto S."/>
            <person name="Bubb K."/>
            <person name="Simms E."/>
            <person name="Levy R."/>
            <person name="Clendenning J."/>
            <person name="Kaul R."/>
            <person name="Kent W.J."/>
            <person name="Furey T.S."/>
            <person name="Baertsch R.A."/>
            <person name="Brent M.R."/>
            <person name="Keibler E."/>
            <person name="Flicek P."/>
            <person name="Bork P."/>
            <person name="Suyama M."/>
            <person name="Bailey J.A."/>
            <person name="Portnoy M.E."/>
            <person name="Torrents D."/>
            <person name="Chinwalla A.T."/>
            <person name="Gish W.R."/>
            <person name="Eddy S.R."/>
            <person name="McPherson J.D."/>
            <person name="Olson M.V."/>
            <person name="Eichler E.E."/>
            <person name="Green E.D."/>
            <person name="Waterston R.H."/>
            <person name="Wilson R.K."/>
        </authorList>
    </citation>
    <scope>NUCLEOTIDE SEQUENCE [LARGE SCALE GENOMIC DNA] (IMGT ALLELE TRBV25-1*01; ALLELE TRBJ2-3*01 AND ALLELE TRBC2*01)</scope>
</reference>
<reference key="5">
    <citation type="journal article" date="2000" name="Exp. Clin. Immunogenet.">
        <title>Protein displays of the human T cell receptor alpha, beta, gamma and delta variable and joining regions.</title>
        <authorList>
            <person name="Folch G."/>
            <person name="Scaviner D."/>
            <person name="Contet V."/>
            <person name="Lefranc M.P."/>
        </authorList>
    </citation>
    <scope>CDR1 AND CDR2 DOMAINS</scope>
</reference>
<reference key="6">
    <citation type="journal article" date="2009" name="Immunogenetics">
        <title>A clonotype nomenclature for T cell receptors.</title>
        <authorList>
            <person name="Yassai M.B."/>
            <person name="Naumov Y.N."/>
            <person name="Naumova E.N."/>
            <person name="Gorski J."/>
        </authorList>
    </citation>
    <scope>NOMENCLATURE</scope>
</reference>
<name>TRBR2_HUMAN</name>
<feature type="signal peptide" evidence="5">
    <location>
        <begin position="1"/>
        <end position="21"/>
    </location>
</feature>
<feature type="chain" id="PRO_0000450078" description="T cell receptor beta chain MC.7.G5">
    <location>
        <begin position="22"/>
        <end position="315"/>
    </location>
</feature>
<feature type="transmembrane region" description="Helical" evidence="5">
    <location>
        <begin position="282"/>
        <end position="304"/>
    </location>
</feature>
<feature type="topological domain" description="Cytoplasmic" evidence="5">
    <location>
        <begin position="305"/>
        <end position="315"/>
    </location>
</feature>
<feature type="domain" description="Ig-like V-type" evidence="6">
    <location>
        <begin position="22"/>
        <end position="114"/>
    </location>
</feature>
<feature type="domain" description="Ig-like C1-type" evidence="6">
    <location>
        <begin position="145"/>
        <end position="254"/>
    </location>
</feature>
<feature type="region of interest" description="T cell receptor beta variable 25-1" evidence="8">
    <location>
        <begin position="22"/>
        <end position="114"/>
    </location>
</feature>
<feature type="region of interest" description="CDR1" evidence="9">
    <location>
        <begin position="46"/>
        <end position="50"/>
    </location>
</feature>
<feature type="region of interest" description="CDR2" evidence="9">
    <location>
        <begin position="68"/>
        <end position="73"/>
    </location>
</feature>
<feature type="region of interest" description="CDR3" evidence="8 9">
    <location>
        <begin position="110"/>
        <end position="127"/>
    </location>
</feature>
<feature type="region of interest" description="T cell receptor beta joining 2-3" evidence="8">
    <location>
        <begin position="122"/>
        <end position="136"/>
    </location>
</feature>
<feature type="region of interest" description="T cell receptor beta constant 2" evidence="8">
    <location>
        <begin position="138"/>
        <end position="315"/>
    </location>
</feature>
<feature type="region of interest" description="Connecting peptide" evidence="3">
    <location>
        <begin position="267"/>
        <end position="281"/>
    </location>
</feature>
<feature type="glycosylation site" description="N-linked (GlcNAc...) asparagine" evidence="7">
    <location>
        <position position="72"/>
    </location>
</feature>
<feature type="glycosylation site" description="N-linked (GlcNAc...) asparagine" evidence="7">
    <location>
        <position position="206"/>
    </location>
</feature>
<feature type="disulfide bond" evidence="6">
    <location>
        <begin position="42"/>
        <end position="110"/>
    </location>
</feature>
<feature type="disulfide bond" evidence="1 6">
    <location>
        <begin position="167"/>
        <end position="232"/>
    </location>
</feature>
<feature type="disulfide bond" description="Interchain (with C-94 in TRAC)" evidence="3">
    <location>
        <position position="267"/>
    </location>
</feature>
<feature type="helix" evidence="11">
    <location>
        <begin position="139"/>
        <end position="141"/>
    </location>
</feature>
<feature type="strand" evidence="11">
    <location>
        <begin position="146"/>
        <end position="151"/>
    </location>
</feature>
<feature type="helix" evidence="11">
    <location>
        <begin position="154"/>
        <end position="160"/>
    </location>
</feature>
<feature type="strand" evidence="11">
    <location>
        <begin position="161"/>
        <end position="174"/>
    </location>
</feature>
<feature type="strand" evidence="11">
    <location>
        <begin position="177"/>
        <end position="183"/>
    </location>
</feature>
<feature type="strand" evidence="11">
    <location>
        <begin position="186"/>
        <end position="188"/>
    </location>
</feature>
<feature type="strand" evidence="11">
    <location>
        <begin position="192"/>
        <end position="194"/>
    </location>
</feature>
<feature type="strand" evidence="11">
    <location>
        <begin position="199"/>
        <end position="205"/>
    </location>
</feature>
<feature type="strand" evidence="11">
    <location>
        <begin position="210"/>
        <end position="219"/>
    </location>
</feature>
<feature type="helix" evidence="11">
    <location>
        <begin position="220"/>
        <end position="223"/>
    </location>
</feature>
<feature type="strand" evidence="11">
    <location>
        <begin position="229"/>
        <end position="236"/>
    </location>
</feature>
<feature type="strand" evidence="11">
    <location>
        <begin position="247"/>
        <end position="249"/>
    </location>
</feature>
<feature type="strand" evidence="11">
    <location>
        <begin position="253"/>
        <end position="262"/>
    </location>
</feature>
<feature type="helix" evidence="12">
    <location>
        <begin position="281"/>
        <end position="290"/>
    </location>
</feature>
<feature type="helix" evidence="12">
    <location>
        <begin position="293"/>
        <end position="301"/>
    </location>
</feature>
<feature type="helix" evidence="12">
    <location>
        <begin position="304"/>
        <end position="307"/>
    </location>
</feature>
<keyword id="KW-0002">3D-structure</keyword>
<keyword id="KW-1003">Cell membrane</keyword>
<keyword id="KW-1015">Disulfide bond</keyword>
<keyword id="KW-0325">Glycoprotein</keyword>
<keyword id="KW-0391">Immunity</keyword>
<keyword id="KW-0472">Membrane</keyword>
<keyword id="KW-0675">Receptor</keyword>
<keyword id="KW-1185">Reference proteome</keyword>
<keyword id="KW-0732">Signal</keyword>
<keyword id="KW-0812">Transmembrane</keyword>
<keyword id="KW-1133">Transmembrane helix</keyword>
<accession>P0DTU4</accession>